<keyword id="KW-0436">Ligase</keyword>
<keyword id="KW-0597">Phosphoprotein</keyword>
<keyword id="KW-0662">Pyridine nucleotide biosynthesis</keyword>
<proteinExistence type="inferred from homology"/>
<reference key="1">
    <citation type="journal article" date="2004" name="Proc. Natl. Acad. Sci. U.S.A.">
        <title>Insights into the evolution of Yersinia pestis through whole-genome comparison with Yersinia pseudotuberculosis.</title>
        <authorList>
            <person name="Chain P.S.G."/>
            <person name="Carniel E."/>
            <person name="Larimer F.W."/>
            <person name="Lamerdin J."/>
            <person name="Stoutland P.O."/>
            <person name="Regala W.M."/>
            <person name="Georgescu A.M."/>
            <person name="Vergez L.M."/>
            <person name="Land M.L."/>
            <person name="Motin V.L."/>
            <person name="Brubaker R.R."/>
            <person name="Fowler J."/>
            <person name="Hinnebusch J."/>
            <person name="Marceau M."/>
            <person name="Medigue C."/>
            <person name="Simonet M."/>
            <person name="Chenal-Francisque V."/>
            <person name="Souza B."/>
            <person name="Dacheux D."/>
            <person name="Elliott J.M."/>
            <person name="Derbise A."/>
            <person name="Hauser L.J."/>
            <person name="Garcia E."/>
        </authorList>
    </citation>
    <scope>NUCLEOTIDE SEQUENCE [LARGE SCALE GENOMIC DNA]</scope>
    <source>
        <strain>IP32953</strain>
    </source>
</reference>
<name>PNCB_YERPS</name>
<comment type="function">
    <text evidence="1">Catalyzes the synthesis of beta-nicotinate D-ribonucleotide from nicotinate and 5-phospho-D-ribose 1-phosphate at the expense of ATP.</text>
</comment>
<comment type="catalytic activity">
    <reaction evidence="1">
        <text>nicotinate + 5-phospho-alpha-D-ribose 1-diphosphate + ATP + H2O = nicotinate beta-D-ribonucleotide + ADP + phosphate + diphosphate</text>
        <dbReference type="Rhea" id="RHEA:36163"/>
        <dbReference type="ChEBI" id="CHEBI:15377"/>
        <dbReference type="ChEBI" id="CHEBI:30616"/>
        <dbReference type="ChEBI" id="CHEBI:32544"/>
        <dbReference type="ChEBI" id="CHEBI:33019"/>
        <dbReference type="ChEBI" id="CHEBI:43474"/>
        <dbReference type="ChEBI" id="CHEBI:57502"/>
        <dbReference type="ChEBI" id="CHEBI:58017"/>
        <dbReference type="ChEBI" id="CHEBI:456216"/>
        <dbReference type="EC" id="6.3.4.21"/>
    </reaction>
</comment>
<comment type="pathway">
    <text evidence="1">Cofactor biosynthesis; NAD(+) biosynthesis; nicotinate D-ribonucleotide from nicotinate: step 1/1.</text>
</comment>
<comment type="PTM">
    <text evidence="1">Transiently phosphorylated on a His residue during the reaction cycle. Phosphorylation strongly increases the affinity for substrates and increases the rate of nicotinate D-ribonucleotide production. Dephosphorylation regenerates the low-affinity form of the enzyme, leading to product release.</text>
</comment>
<comment type="similarity">
    <text evidence="1">Belongs to the NAPRTase family.</text>
</comment>
<evidence type="ECO:0000255" key="1">
    <source>
        <dbReference type="HAMAP-Rule" id="MF_00570"/>
    </source>
</evidence>
<accession>Q66CG6</accession>
<gene>
    <name evidence="1" type="primary">pncB</name>
    <name type="ordered locus">YPTB1437</name>
</gene>
<protein>
    <recommendedName>
        <fullName evidence="1">Nicotinate phosphoribosyltransferase</fullName>
        <shortName evidence="1">NAPRTase</shortName>
        <ecNumber evidence="1">6.3.4.21</ecNumber>
    </recommendedName>
</protein>
<feature type="chain" id="PRO_0000205856" description="Nicotinate phosphoribosyltransferase">
    <location>
        <begin position="1"/>
        <end position="401"/>
    </location>
</feature>
<feature type="modified residue" description="Phosphohistidine; by autocatalysis" evidence="1">
    <location>
        <position position="221"/>
    </location>
</feature>
<organism>
    <name type="scientific">Yersinia pseudotuberculosis serotype I (strain IP32953)</name>
    <dbReference type="NCBI Taxonomy" id="273123"/>
    <lineage>
        <taxon>Bacteria</taxon>
        <taxon>Pseudomonadati</taxon>
        <taxon>Pseudomonadota</taxon>
        <taxon>Gammaproteobacteria</taxon>
        <taxon>Enterobacterales</taxon>
        <taxon>Yersiniaceae</taxon>
        <taxon>Yersinia</taxon>
    </lineage>
</organism>
<dbReference type="EC" id="6.3.4.21" evidence="1"/>
<dbReference type="EMBL" id="BX936398">
    <property type="protein sequence ID" value="CAH20677.1"/>
    <property type="molecule type" value="Genomic_DNA"/>
</dbReference>
<dbReference type="RefSeq" id="WP_002228013.1">
    <property type="nucleotide sequence ID" value="NZ_CP009712.1"/>
</dbReference>
<dbReference type="SMR" id="Q66CG6"/>
<dbReference type="GeneID" id="57977209"/>
<dbReference type="KEGG" id="ypo:BZ17_1080"/>
<dbReference type="KEGG" id="yps:YPTB1437"/>
<dbReference type="PATRIC" id="fig|273123.14.peg.1146"/>
<dbReference type="UniPathway" id="UPA00253">
    <property type="reaction ID" value="UER00457"/>
</dbReference>
<dbReference type="Proteomes" id="UP000001011">
    <property type="component" value="Chromosome"/>
</dbReference>
<dbReference type="GO" id="GO:0005829">
    <property type="term" value="C:cytosol"/>
    <property type="evidence" value="ECO:0007669"/>
    <property type="project" value="TreeGrafter"/>
</dbReference>
<dbReference type="GO" id="GO:0004516">
    <property type="term" value="F:nicotinate phosphoribosyltransferase activity"/>
    <property type="evidence" value="ECO:0007669"/>
    <property type="project" value="UniProtKB-UniRule"/>
</dbReference>
<dbReference type="GO" id="GO:0034355">
    <property type="term" value="P:NAD biosynthetic process via the salvage pathway"/>
    <property type="evidence" value="ECO:0007669"/>
    <property type="project" value="TreeGrafter"/>
</dbReference>
<dbReference type="CDD" id="cd01401">
    <property type="entry name" value="PncB_like"/>
    <property type="match status" value="1"/>
</dbReference>
<dbReference type="FunFam" id="3.20.140.10:FF:000001">
    <property type="entry name" value="Nicotinate phosphoribosyltransferase"/>
    <property type="match status" value="1"/>
</dbReference>
<dbReference type="Gene3D" id="3.20.140.10">
    <property type="entry name" value="nicotinate phosphoribosyltransferase"/>
    <property type="match status" value="1"/>
</dbReference>
<dbReference type="HAMAP" id="MF_00570">
    <property type="entry name" value="NAPRTase"/>
    <property type="match status" value="1"/>
</dbReference>
<dbReference type="InterPro" id="IPR041525">
    <property type="entry name" value="N/Namide_PRibTrfase"/>
</dbReference>
<dbReference type="InterPro" id="IPR040727">
    <property type="entry name" value="NAPRTase_N"/>
</dbReference>
<dbReference type="InterPro" id="IPR006406">
    <property type="entry name" value="Nic_PRibTrfase"/>
</dbReference>
<dbReference type="InterPro" id="IPR007229">
    <property type="entry name" value="Nic_PRibTrfase-Fam"/>
</dbReference>
<dbReference type="InterPro" id="IPR036068">
    <property type="entry name" value="Nicotinate_pribotase-like_C"/>
</dbReference>
<dbReference type="NCBIfam" id="TIGR01514">
    <property type="entry name" value="NAPRTase"/>
    <property type="match status" value="1"/>
</dbReference>
<dbReference type="NCBIfam" id="NF003704">
    <property type="entry name" value="PRK05321.1"/>
    <property type="match status" value="1"/>
</dbReference>
<dbReference type="PANTHER" id="PTHR11098">
    <property type="entry name" value="NICOTINATE PHOSPHORIBOSYLTRANSFERASE"/>
    <property type="match status" value="1"/>
</dbReference>
<dbReference type="PANTHER" id="PTHR11098:SF1">
    <property type="entry name" value="NICOTINATE PHOSPHORIBOSYLTRANSFERASE"/>
    <property type="match status" value="1"/>
</dbReference>
<dbReference type="Pfam" id="PF04095">
    <property type="entry name" value="NAPRTase"/>
    <property type="match status" value="1"/>
</dbReference>
<dbReference type="Pfam" id="PF17767">
    <property type="entry name" value="NAPRTase_N"/>
    <property type="match status" value="1"/>
</dbReference>
<dbReference type="PIRSF" id="PIRSF000484">
    <property type="entry name" value="NAPRT"/>
    <property type="match status" value="1"/>
</dbReference>
<dbReference type="SUPFAM" id="SSF51690">
    <property type="entry name" value="Nicotinate/Quinolinate PRTase C-terminal domain-like"/>
    <property type="match status" value="1"/>
</dbReference>
<dbReference type="SUPFAM" id="SSF54675">
    <property type="entry name" value="Nicotinate/Quinolinate PRTase N-terminal domain-like"/>
    <property type="match status" value="1"/>
</dbReference>
<sequence>MTQDASPILTSLLDTDAYKLHMQQAVFHHYRHITVAAEFRCRSDELLGVYADEIRHQVTLMGQLALTSDEFIYLSSLPFFQDDYLHWLRDFRFKPEQVSVAVHDGKLDIRIAGLWCEVIMWEVPLLAVISEIVHRRRSTQVTTDQAVQQLRTKLEQFNALSADIDITHFKLMDFGTRRRFSREIQHTVVSTLKDEFPYLVGTSNYDLARTLALAPVGTQAHEWFQAHQQISPTLANSQRVALQVWLDEYPNQLGIALTDCITMDAFLRDFDLAFANRYQGLRHDSGDPIEWGEKAIAHYEKLGIDPMKKVLVFSDNLDLEKALFLYRHFYQRIKLVFGIGTRLTCDIPDVKPLNIVIKLVECNDKPVAKLSDSPGKTICQDPAFVDQLRKAFALPLVKKAS</sequence>